<protein>
    <recommendedName>
        <fullName>V-type proton ATPase subunit S1</fullName>
        <shortName>V-ATPase subunit S1</shortName>
    </recommendedName>
    <alternativeName>
        <fullName>V-ATPase Ac45 subunit</fullName>
    </alternativeName>
    <alternativeName>
        <fullName>V-ATPase S1 accessory protein</fullName>
    </alternativeName>
    <alternativeName>
        <fullName>Vacuolar proton pump subunit S1</fullName>
    </alternativeName>
</protein>
<evidence type="ECO:0000250" key="1">
    <source>
        <dbReference type="UniProtKB" id="O54715"/>
    </source>
</evidence>
<evidence type="ECO:0000250" key="2">
    <source>
        <dbReference type="UniProtKB" id="Q15904"/>
    </source>
</evidence>
<evidence type="ECO:0000250" key="3">
    <source>
        <dbReference type="UniProtKB" id="Q9R1Q9"/>
    </source>
</evidence>
<evidence type="ECO:0000255" key="4"/>
<evidence type="ECO:0000269" key="5">
    <source>
    </source>
</evidence>
<evidence type="ECO:0000305" key="6"/>
<evidence type="ECO:0007744" key="7">
    <source>
        <dbReference type="PDB" id="6XBW"/>
    </source>
</evidence>
<evidence type="ECO:0007744" key="8">
    <source>
        <dbReference type="PDB" id="6XBY"/>
    </source>
</evidence>
<evidence type="ECO:0007829" key="9">
    <source>
        <dbReference type="PDB" id="6XBW"/>
    </source>
</evidence>
<organism>
    <name type="scientific">Bos taurus</name>
    <name type="common">Bovine</name>
    <dbReference type="NCBI Taxonomy" id="9913"/>
    <lineage>
        <taxon>Eukaryota</taxon>
        <taxon>Metazoa</taxon>
        <taxon>Chordata</taxon>
        <taxon>Craniata</taxon>
        <taxon>Vertebrata</taxon>
        <taxon>Euteleostomi</taxon>
        <taxon>Mammalia</taxon>
        <taxon>Eutheria</taxon>
        <taxon>Laurasiatheria</taxon>
        <taxon>Artiodactyla</taxon>
        <taxon>Ruminantia</taxon>
        <taxon>Pecora</taxon>
        <taxon>Bovidae</taxon>
        <taxon>Bovinae</taxon>
        <taxon>Bos</taxon>
    </lineage>
</organism>
<name>VAS1_BOVIN</name>
<reference key="1">
    <citation type="journal article" date="1994" name="J. Biol. Chem.">
        <title>A novel accessory subunit for vacuolar H(+)-ATPase from chromaffin granules.</title>
        <authorList>
            <person name="Supek F."/>
            <person name="Supekova L."/>
            <person name="Mandiyan S."/>
            <person name="Pan Y.-C.E."/>
            <person name="Nelson H."/>
            <person name="Nelson N."/>
        </authorList>
    </citation>
    <scope>NUCLEOTIDE SEQUENCE [MRNA]</scope>
    <scope>PROTEIN SEQUENCE OF 378-388</scope>
    <source>
        <tissue>Adrenal chromaffin</tissue>
    </source>
</reference>
<reference evidence="7 8" key="2">
    <citation type="journal article" date="2020" name="Nat. Commun.">
        <title>Cryo-EM structures of intact V-ATPase from bovine brain.</title>
        <authorList>
            <person name="Wang R."/>
            <person name="Long T."/>
            <person name="Hassan A."/>
            <person name="Wang J."/>
            <person name="Sun Y."/>
            <person name="Xie X.S."/>
            <person name="Li X."/>
        </authorList>
    </citation>
    <scope>STRUCTURE BY ELECTRON MICROSCOPY (3.37 ANGSTROMS)</scope>
    <scope>GLYCOSYLATION AT ASN-271; ASN-294; ASN-301; ASN-348; ASN-355 AND ASN-404</scope>
    <scope>DISULFIDE BONDS</scope>
</reference>
<feature type="signal peptide" evidence="4">
    <location>
        <begin position="1"/>
        <end position="35"/>
    </location>
</feature>
<feature type="chain" id="PRO_0000002542" description="V-type proton ATPase subunit S1">
    <location>
        <begin position="36"/>
        <end position="468"/>
    </location>
</feature>
<feature type="propeptide" id="PRO_0000454040" evidence="3">
    <location>
        <begin position="36"/>
        <end position="228"/>
    </location>
</feature>
<feature type="topological domain" description="Lumenal" evidence="4">
    <location>
        <begin position="36"/>
        <end position="417"/>
    </location>
</feature>
<feature type="transmembrane region" description="Helical" evidence="4">
    <location>
        <begin position="418"/>
        <end position="438"/>
    </location>
</feature>
<feature type="topological domain" description="Cytoplasmic" evidence="4">
    <location>
        <begin position="439"/>
        <end position="468"/>
    </location>
</feature>
<feature type="site" description="Cleavage; by furin" evidence="3">
    <location>
        <begin position="228"/>
        <end position="229"/>
    </location>
</feature>
<feature type="glycosylation site" description="N-linked (GlcNAc...) asparagine" evidence="4">
    <location>
        <position position="167"/>
    </location>
</feature>
<feature type="glycosylation site" description="N-linked (GlcNAc...) asparagine" evidence="4">
    <location>
        <position position="258"/>
    </location>
</feature>
<feature type="glycosylation site" description="N-linked (GlcNAc...) asparagine" evidence="5 7 8">
    <location>
        <position position="271"/>
    </location>
</feature>
<feature type="glycosylation site" description="N-linked (GlcNAc...) asparagine" evidence="5 7 8">
    <location>
        <position position="294"/>
    </location>
</feature>
<feature type="glycosylation site" description="N-linked (GlcNAc...) asparagine" evidence="5 7 8">
    <location>
        <position position="301"/>
    </location>
</feature>
<feature type="glycosylation site" description="N-linked (GlcNAc...) asparagine" evidence="5 7 8">
    <location>
        <position position="348"/>
    </location>
</feature>
<feature type="glycosylation site" description="N-linked (GlcNAc...) asparagine" evidence="5 7 8">
    <location>
        <position position="355"/>
    </location>
</feature>
<feature type="glycosylation site" description="N-linked (GlcNAc...) asparagine" evidence="5 7 8">
    <location>
        <position position="404"/>
    </location>
</feature>
<feature type="disulfide bond" evidence="5 7 8">
    <location>
        <begin position="369"/>
        <end position="416"/>
    </location>
</feature>
<feature type="strand" evidence="9">
    <location>
        <begin position="259"/>
        <end position="264"/>
    </location>
</feature>
<feature type="strand" evidence="9">
    <location>
        <begin position="266"/>
        <end position="268"/>
    </location>
</feature>
<feature type="strand" evidence="9">
    <location>
        <begin position="272"/>
        <end position="276"/>
    </location>
</feature>
<feature type="strand" evidence="9">
    <location>
        <begin position="279"/>
        <end position="282"/>
    </location>
</feature>
<feature type="helix" evidence="9">
    <location>
        <begin position="285"/>
        <end position="289"/>
    </location>
</feature>
<feature type="strand" evidence="9">
    <location>
        <begin position="302"/>
        <end position="310"/>
    </location>
</feature>
<feature type="strand" evidence="9">
    <location>
        <begin position="312"/>
        <end position="317"/>
    </location>
</feature>
<feature type="strand" evidence="9">
    <location>
        <begin position="320"/>
        <end position="330"/>
    </location>
</feature>
<feature type="turn" evidence="9">
    <location>
        <begin position="331"/>
        <end position="334"/>
    </location>
</feature>
<feature type="strand" evidence="9">
    <location>
        <begin position="335"/>
        <end position="346"/>
    </location>
</feature>
<feature type="strand" evidence="9">
    <location>
        <begin position="354"/>
        <end position="356"/>
    </location>
</feature>
<feature type="strand" evidence="9">
    <location>
        <begin position="365"/>
        <end position="370"/>
    </location>
</feature>
<feature type="strand" evidence="9">
    <location>
        <begin position="377"/>
        <end position="379"/>
    </location>
</feature>
<feature type="strand" evidence="9">
    <location>
        <begin position="381"/>
        <end position="388"/>
    </location>
</feature>
<feature type="strand" evidence="9">
    <location>
        <begin position="390"/>
        <end position="401"/>
    </location>
</feature>
<feature type="strand" evidence="9">
    <location>
        <begin position="412"/>
        <end position="416"/>
    </location>
</feature>
<feature type="helix" evidence="9">
    <location>
        <begin position="422"/>
        <end position="445"/>
    </location>
</feature>
<dbReference type="EMBL" id="U10039">
    <property type="protein sequence ID" value="AAA50752.1"/>
    <property type="molecule type" value="mRNA"/>
</dbReference>
<dbReference type="PIR" id="A55116">
    <property type="entry name" value="A55116"/>
</dbReference>
<dbReference type="RefSeq" id="NP_787000.1">
    <property type="nucleotide sequence ID" value="NM_175806.2"/>
</dbReference>
<dbReference type="PDB" id="6XBW">
    <property type="method" value="EM"/>
    <property type="resolution" value="3.37 A"/>
    <property type="chains" value="s=1-468"/>
</dbReference>
<dbReference type="PDB" id="6XBY">
    <property type="method" value="EM"/>
    <property type="resolution" value="3.79 A"/>
    <property type="chains" value="s=1-468"/>
</dbReference>
<dbReference type="PDB" id="7KHR">
    <property type="method" value="EM"/>
    <property type="resolution" value="3.62 A"/>
    <property type="chains" value="s=1-468"/>
</dbReference>
<dbReference type="PDBsum" id="6XBW"/>
<dbReference type="PDBsum" id="6XBY"/>
<dbReference type="PDBsum" id="7KHR"/>
<dbReference type="EMDB" id="EMD-22121"/>
<dbReference type="EMDB" id="EMD-22122"/>
<dbReference type="EMDB" id="EMD-22880"/>
<dbReference type="SMR" id="P40682"/>
<dbReference type="CORUM" id="P40682"/>
<dbReference type="FunCoup" id="P40682">
    <property type="interactions" value="2111"/>
</dbReference>
<dbReference type="STRING" id="9913.ENSBTAP00000016073"/>
<dbReference type="GlyCosmos" id="P40682">
    <property type="glycosylation" value="8 sites, No reported glycans"/>
</dbReference>
<dbReference type="GlyGen" id="P40682">
    <property type="glycosylation" value="8 sites"/>
</dbReference>
<dbReference type="iPTMnet" id="P40682"/>
<dbReference type="PaxDb" id="9913-ENSBTAP00000016073"/>
<dbReference type="PeptideAtlas" id="P40682"/>
<dbReference type="GeneID" id="327687"/>
<dbReference type="KEGG" id="bta:327687"/>
<dbReference type="CTD" id="537"/>
<dbReference type="VEuPathDB" id="HostDB:ENSBTAG00000012117"/>
<dbReference type="eggNOG" id="KOG3868">
    <property type="taxonomic scope" value="Eukaryota"/>
</dbReference>
<dbReference type="HOGENOM" id="CLU_039408_1_0_1"/>
<dbReference type="InParanoid" id="P40682"/>
<dbReference type="OMA" id="WFTMEHL"/>
<dbReference type="OrthoDB" id="9985059at2759"/>
<dbReference type="TreeFam" id="TF325819"/>
<dbReference type="Reactome" id="R-BTA-77387">
    <property type="pathway name" value="Insulin receptor recycling"/>
</dbReference>
<dbReference type="Reactome" id="R-BTA-8980692">
    <property type="pathway name" value="RHOA GTPase cycle"/>
</dbReference>
<dbReference type="Reactome" id="R-BTA-917977">
    <property type="pathway name" value="Transferrin endocytosis and recycling"/>
</dbReference>
<dbReference type="Reactome" id="R-BTA-983712">
    <property type="pathway name" value="Ion channel transport"/>
</dbReference>
<dbReference type="Proteomes" id="UP000009136">
    <property type="component" value="Chromosome X"/>
</dbReference>
<dbReference type="Bgee" id="ENSBTAG00000012117">
    <property type="expression patterns" value="Expressed in spermatocyte and 103 other cell types or tissues"/>
</dbReference>
<dbReference type="GO" id="GO:0030665">
    <property type="term" value="C:clathrin-coated vesicle membrane"/>
    <property type="evidence" value="ECO:0007669"/>
    <property type="project" value="UniProtKB-SubCell"/>
</dbReference>
<dbReference type="GO" id="GO:0005789">
    <property type="term" value="C:endoplasmic reticulum membrane"/>
    <property type="evidence" value="ECO:0007669"/>
    <property type="project" value="UniProtKB-SubCell"/>
</dbReference>
<dbReference type="GO" id="GO:0033116">
    <property type="term" value="C:endoplasmic reticulum-Golgi intermediate compartment membrane"/>
    <property type="evidence" value="ECO:0007669"/>
    <property type="project" value="UniProtKB-SubCell"/>
</dbReference>
<dbReference type="GO" id="GO:0033176">
    <property type="term" value="C:proton-transporting V-type ATPase complex"/>
    <property type="evidence" value="ECO:0000318"/>
    <property type="project" value="GO_Central"/>
</dbReference>
<dbReference type="GO" id="GO:0030672">
    <property type="term" value="C:synaptic vesicle membrane"/>
    <property type="evidence" value="ECO:0007669"/>
    <property type="project" value="UniProtKB-SubCell"/>
</dbReference>
<dbReference type="GO" id="GO:0001671">
    <property type="term" value="F:ATPase activator activity"/>
    <property type="evidence" value="ECO:0000318"/>
    <property type="project" value="GO_Central"/>
</dbReference>
<dbReference type="GO" id="GO:0036295">
    <property type="term" value="P:cellular response to increased oxygen levels"/>
    <property type="evidence" value="ECO:0000250"/>
    <property type="project" value="UniProtKB"/>
</dbReference>
<dbReference type="GO" id="GO:0006879">
    <property type="term" value="P:intracellular iron ion homeostasis"/>
    <property type="evidence" value="ECO:0000250"/>
    <property type="project" value="UniProtKB"/>
</dbReference>
<dbReference type="GO" id="GO:1902600">
    <property type="term" value="P:proton transmembrane transport"/>
    <property type="evidence" value="ECO:0007669"/>
    <property type="project" value="UniProtKB-KW"/>
</dbReference>
<dbReference type="GO" id="GO:0030641">
    <property type="term" value="P:regulation of cellular pH"/>
    <property type="evidence" value="ECO:0000318"/>
    <property type="project" value="GO_Central"/>
</dbReference>
<dbReference type="FunFam" id="2.40.160.110:FF:000003">
    <property type="entry name" value="ATPase H+ transporting accessory protein 1"/>
    <property type="match status" value="1"/>
</dbReference>
<dbReference type="Gene3D" id="2.40.160.110">
    <property type="match status" value="1"/>
</dbReference>
<dbReference type="InterPro" id="IPR008388">
    <property type="entry name" value="Ac45_acc_su"/>
</dbReference>
<dbReference type="InterPro" id="IPR046756">
    <property type="entry name" value="VAS1/VOA1_TM"/>
</dbReference>
<dbReference type="InterPro" id="IPR046755">
    <property type="entry name" value="VAS1_LD"/>
</dbReference>
<dbReference type="PANTHER" id="PTHR12471:SF2">
    <property type="entry name" value="V-TYPE PROTON ATPASE SUBUNIT S1"/>
    <property type="match status" value="1"/>
</dbReference>
<dbReference type="PANTHER" id="PTHR12471">
    <property type="entry name" value="VACUOLAR ATP SYNTHASE SUBUNIT S1"/>
    <property type="match status" value="1"/>
</dbReference>
<dbReference type="Pfam" id="PF20520">
    <property type="entry name" value="Ac45-VOA1_TM"/>
    <property type="match status" value="1"/>
</dbReference>
<dbReference type="Pfam" id="PF05827">
    <property type="entry name" value="VAS1_LD"/>
    <property type="match status" value="1"/>
</dbReference>
<gene>
    <name type="primary">ATP6AP1</name>
    <name type="synonym">ATP6IP1</name>
    <name type="synonym">ATP6S1</name>
</gene>
<keyword id="KW-0002">3D-structure</keyword>
<keyword id="KW-0968">Cytoplasmic vesicle</keyword>
<keyword id="KW-0903">Direct protein sequencing</keyword>
<keyword id="KW-1015">Disulfide bond</keyword>
<keyword id="KW-0256">Endoplasmic reticulum</keyword>
<keyword id="KW-0325">Glycoprotein</keyword>
<keyword id="KW-0375">Hydrogen ion transport</keyword>
<keyword id="KW-0406">Ion transport</keyword>
<keyword id="KW-0472">Membrane</keyword>
<keyword id="KW-1185">Reference proteome</keyword>
<keyword id="KW-0732">Signal</keyword>
<keyword id="KW-0770">Synapse</keyword>
<keyword id="KW-0812">Transmembrane</keyword>
<keyword id="KW-1133">Transmembrane helix</keyword>
<keyword id="KW-0813">Transport</keyword>
<comment type="function">
    <text evidence="2 3 5">Accessory subunit of the proton-transporting vacuolar (V)-ATPase protein pump, which is required for luminal acidification of secretory vesicles (PubMed:32764564). Guides the V-type ATPase into specialized subcellular compartments, such as neuroendocrine regulated secretory vesicles or the ruffled border of the osteoclast, thereby regulating its activity. Involved in membrane trafficking and Ca(2+)-dependent membrane fusion. May play a role in the assembly of the V-type ATPase complex. In aerobic conditions, involved in intracellular iron homeostasis, thus triggering the activity of Fe(2+) prolyl hydroxylase (PHD) enzymes, and leading to HIF1A hydroxylation and subsequent proteasomal degradation (By similarity). In islets of Langerhans cells, may regulate the acidification of dense-core secretory granules (By similarity).</text>
</comment>
<comment type="subunit">
    <text evidence="2 5">Accessory component of the multisubunit proton-transporting vacuolar (V)-ATPase protein pump (PubMed:32764564). Interacts (via N-terminus) with ATP6AP2 (via N-terminus) (PubMed:32764564). Interacts with RNASEK (By similarity). Interacts with TMEM106B (via C-terminus) (By similarity).</text>
</comment>
<comment type="subcellular location">
    <subcellularLocation>
        <location evidence="2">Endoplasmic reticulum membrane</location>
        <topology evidence="2">Single-pass type I membrane protein</topology>
    </subcellularLocation>
    <subcellularLocation>
        <location evidence="2">Endoplasmic reticulum-Golgi intermediate compartment membrane</location>
    </subcellularLocation>
    <subcellularLocation>
        <location evidence="1">Cytoplasmic vesicle</location>
        <location evidence="1">Secretory vesicle</location>
        <location evidence="1">Synaptic vesicle membrane</location>
        <topology evidence="6">Single-pass type I membrane protein</topology>
    </subcellularLocation>
    <subcellularLocation>
        <location evidence="5">Cytoplasmic vesicle</location>
        <location evidence="5">Clathrin-coated vesicle membrane</location>
        <topology evidence="6">Single-pass type I membrane protein</topology>
    </subcellularLocation>
    <text evidence="2">Not detected in trans-Golgi network.</text>
</comment>
<comment type="PTM">
    <text evidence="5">N-glycosylated.</text>
</comment>
<comment type="similarity">
    <text evidence="6">Belongs to the vacuolar ATPase subunit S1 family.</text>
</comment>
<sequence>MMAATAAAQVRAGTRWAPALCRMPWLPLMLVAAAAATSEQQVPLVLWSSDRGLWAPAADTHEGHITSDMQLSTYLDPALELGPRNVLLFLQDKLSIEDFTAYGGVFGNKQDSAFSNLENALDLAPSSLVLPAVDWYAISTLTTYLQEKLGASPLHVDLATLQELKLNASIPALLLIRLPYTASSGLMAPKEVLMGNDEVIGQVLSTLKSEDIPYTAALTAVRPSRVARDVAMVTGGLGRQLLQRTVVPPTMNVPVSYNDSYDTRILFWAQNFSVAYGEHWEDLTSRTFGVQDLNLTGSFWNDTVARLVLTYDSLFGTMVTFKFILANSYYSVSARHWFTLENLEIHSNGSVAYFNASQVTGPSIYSFHCEHVSSENEDGNLLVPDTQPSLWQMTFRDFQIQAFNVTDKKFSYASDCAGFFSPGIWMGLLTSLFMLFIFTYGLHMILSLKTMDRFDDHKGPTITLTQIV</sequence>
<proteinExistence type="evidence at protein level"/>
<accession>P40682</accession>